<accession>B2VGQ6</accession>
<name>RAPA_ERWT9</name>
<organism>
    <name type="scientific">Erwinia tasmaniensis (strain DSM 17950 / CFBP 7177 / CIP 109463 / NCPPB 4357 / Et1/99)</name>
    <dbReference type="NCBI Taxonomy" id="465817"/>
    <lineage>
        <taxon>Bacteria</taxon>
        <taxon>Pseudomonadati</taxon>
        <taxon>Pseudomonadota</taxon>
        <taxon>Gammaproteobacteria</taxon>
        <taxon>Enterobacterales</taxon>
        <taxon>Erwiniaceae</taxon>
        <taxon>Erwinia</taxon>
    </lineage>
</organism>
<feature type="chain" id="PRO_1000188177" description="RNA polymerase-associated protein RapA">
    <location>
        <begin position="1"/>
        <end position="968"/>
    </location>
</feature>
<feature type="domain" description="Helicase ATP-binding" evidence="1">
    <location>
        <begin position="164"/>
        <end position="334"/>
    </location>
</feature>
<feature type="domain" description="Helicase C-terminal" evidence="1">
    <location>
        <begin position="490"/>
        <end position="643"/>
    </location>
</feature>
<feature type="short sequence motif" description="DEAH box">
    <location>
        <begin position="280"/>
        <end position="283"/>
    </location>
</feature>
<feature type="binding site" evidence="1">
    <location>
        <begin position="177"/>
        <end position="184"/>
    </location>
    <ligand>
        <name>ATP</name>
        <dbReference type="ChEBI" id="CHEBI:30616"/>
    </ligand>
</feature>
<sequence>MPFTLGQRWISDTESELGLGTVVAVDTRMVTLLFPATGENRLYARNDSPITRVVFNPGDTITSHEGWQLDVDEITTANGVVSYIGTRLDTSETGVVLREVMLDSKLVFGKPQDRLFAGQLDRMDRFALRFRARKYQSEQYRLATSGLRGMRTSLIPHQLHIAHDVGRRHAPRVLLADEVGLGKTIEAGMIIHQQLQAGRAERVLIVVPETLQHQWLVEMLRRFNLRFALFDDDRYAQAQLDSDNPFDTEQMIICSLDFVRRNKQRLEKLADAEWDLMVVDEAHHLVWSEDAPSREYQVIEQLAEQVPGILLLTATPEQLGMESHFARLRLLDPDRFHDFAQFVEEQKHFSPIADAVTLLLADQKIGNDELNLLNDLMGEQDIEPLLQTANSDREGKLAARQELISMLMDRHGTSRVLFRNTRNGVKGFPKRELHQIRLPLPTQYQTAIKVSGIMSARKTADERAQDMLYPEQIYQEFEGDSGTWWNFDPRVEWLMGYLTSNRDKKVLVICAKAATALQLEQVLREREGIRAAVFHEGLSIIERDRAAAWFASEEDGAQVLLCSEIGSEGRNFQFASQMVMFDLPFNPDLLEQRIGRLDRIGQVHDIQIHVPYLEKTAQAVLVQWYHEGLDAFEHTCPTGRAVYDSVYTQLIAYLAAPENSEGLEAFIQHCRKQHDTLKAQLEQGRDRLLELNSNGGEKGQALADMIAEQDNNIELVNFALNLFDIVGINQEDRSDNLIVLTPGDHMLVPDFPGLPEDGCTITFDRNQALSREDAQYVSWEHPIIRNGLDLILSGDTGSCAISLLKNKALPVGTLLVELIYVVEAQAPKHLQLTRFLPPTPIRMMVDRKGNNLAAKVEFESFNRQLNAVNRHTGSKLVNAVQSDVHEIITLSEDQAAAEARKVIDAARQEADEKLSAELSRLQALSAVNPNIRQDEIDALESNRQQVLSNLDEAGWRLDALRLIVVTHQ</sequence>
<dbReference type="EC" id="3.6.4.-" evidence="1"/>
<dbReference type="EMBL" id="CU468135">
    <property type="protein sequence ID" value="CAO95776.1"/>
    <property type="molecule type" value="Genomic_DNA"/>
</dbReference>
<dbReference type="RefSeq" id="WP_012440478.1">
    <property type="nucleotide sequence ID" value="NC_010694.1"/>
</dbReference>
<dbReference type="SMR" id="B2VGQ6"/>
<dbReference type="STRING" id="465817.ETA_07300"/>
<dbReference type="KEGG" id="eta:ETA_07300"/>
<dbReference type="eggNOG" id="COG0553">
    <property type="taxonomic scope" value="Bacteria"/>
</dbReference>
<dbReference type="HOGENOM" id="CLU_011520_0_0_6"/>
<dbReference type="OrthoDB" id="9814088at2"/>
<dbReference type="Proteomes" id="UP000001726">
    <property type="component" value="Chromosome"/>
</dbReference>
<dbReference type="GO" id="GO:0005524">
    <property type="term" value="F:ATP binding"/>
    <property type="evidence" value="ECO:0007669"/>
    <property type="project" value="UniProtKB-UniRule"/>
</dbReference>
<dbReference type="GO" id="GO:0003677">
    <property type="term" value="F:DNA binding"/>
    <property type="evidence" value="ECO:0007669"/>
    <property type="project" value="UniProtKB-KW"/>
</dbReference>
<dbReference type="GO" id="GO:0004386">
    <property type="term" value="F:helicase activity"/>
    <property type="evidence" value="ECO:0007669"/>
    <property type="project" value="UniProtKB-UniRule"/>
</dbReference>
<dbReference type="GO" id="GO:0016817">
    <property type="term" value="F:hydrolase activity, acting on acid anhydrides"/>
    <property type="evidence" value="ECO:0007669"/>
    <property type="project" value="InterPro"/>
</dbReference>
<dbReference type="GO" id="GO:0006355">
    <property type="term" value="P:regulation of DNA-templated transcription"/>
    <property type="evidence" value="ECO:0007669"/>
    <property type="project" value="UniProtKB-UniRule"/>
</dbReference>
<dbReference type="CDD" id="cd18011">
    <property type="entry name" value="DEXDc_RapA"/>
    <property type="match status" value="1"/>
</dbReference>
<dbReference type="CDD" id="cd18793">
    <property type="entry name" value="SF2_C_SNF"/>
    <property type="match status" value="1"/>
</dbReference>
<dbReference type="FunFam" id="3.40.50.10810:FF:000012">
    <property type="entry name" value="RNA polymerase-associated protein RapA"/>
    <property type="match status" value="1"/>
</dbReference>
<dbReference type="FunFam" id="3.40.50.300:FF:000350">
    <property type="entry name" value="RNA polymerase-associated protein RapA"/>
    <property type="match status" value="1"/>
</dbReference>
<dbReference type="Gene3D" id="2.30.30.140">
    <property type="match status" value="1"/>
</dbReference>
<dbReference type="Gene3D" id="2.30.30.930">
    <property type="match status" value="1"/>
</dbReference>
<dbReference type="Gene3D" id="3.30.360.80">
    <property type="match status" value="1"/>
</dbReference>
<dbReference type="Gene3D" id="6.10.140.1500">
    <property type="match status" value="1"/>
</dbReference>
<dbReference type="Gene3D" id="6.10.140.2230">
    <property type="match status" value="1"/>
</dbReference>
<dbReference type="Gene3D" id="3.40.50.300">
    <property type="entry name" value="P-loop containing nucleotide triphosphate hydrolases"/>
    <property type="match status" value="1"/>
</dbReference>
<dbReference type="Gene3D" id="3.40.50.10810">
    <property type="entry name" value="Tandem AAA-ATPase domain"/>
    <property type="match status" value="1"/>
</dbReference>
<dbReference type="HAMAP" id="MF_01821">
    <property type="entry name" value="Helicase_RapA"/>
    <property type="match status" value="1"/>
</dbReference>
<dbReference type="InterPro" id="IPR014001">
    <property type="entry name" value="Helicase_ATP-bd"/>
</dbReference>
<dbReference type="InterPro" id="IPR001650">
    <property type="entry name" value="Helicase_C-like"/>
</dbReference>
<dbReference type="InterPro" id="IPR023949">
    <property type="entry name" value="Helicase_RapA"/>
</dbReference>
<dbReference type="InterPro" id="IPR027417">
    <property type="entry name" value="P-loop_NTPase"/>
</dbReference>
<dbReference type="InterPro" id="IPR022737">
    <property type="entry name" value="RapA_C"/>
</dbReference>
<dbReference type="InterPro" id="IPR038718">
    <property type="entry name" value="SNF2-like_sf"/>
</dbReference>
<dbReference type="InterPro" id="IPR049730">
    <property type="entry name" value="SNF2/RAD54-like_C"/>
</dbReference>
<dbReference type="InterPro" id="IPR000330">
    <property type="entry name" value="SNF2_N"/>
</dbReference>
<dbReference type="InterPro" id="IPR040765">
    <property type="entry name" value="Tudor_1_RapA"/>
</dbReference>
<dbReference type="InterPro" id="IPR040766">
    <property type="entry name" value="Tudor_2_RapA"/>
</dbReference>
<dbReference type="NCBIfam" id="NF003426">
    <property type="entry name" value="PRK04914.1"/>
    <property type="match status" value="1"/>
</dbReference>
<dbReference type="PANTHER" id="PTHR45766">
    <property type="entry name" value="DNA ANNEALING HELICASE AND ENDONUCLEASE ZRANB3 FAMILY MEMBER"/>
    <property type="match status" value="1"/>
</dbReference>
<dbReference type="PANTHER" id="PTHR45766:SF6">
    <property type="entry name" value="SWI_SNF-RELATED MATRIX-ASSOCIATED ACTIN-DEPENDENT REGULATOR OF CHROMATIN SUBFAMILY A-LIKE PROTEIN 1"/>
    <property type="match status" value="1"/>
</dbReference>
<dbReference type="Pfam" id="PF00271">
    <property type="entry name" value="Helicase_C"/>
    <property type="match status" value="1"/>
</dbReference>
<dbReference type="Pfam" id="PF12137">
    <property type="entry name" value="RapA_C"/>
    <property type="match status" value="1"/>
</dbReference>
<dbReference type="Pfam" id="PF00176">
    <property type="entry name" value="SNF2-rel_dom"/>
    <property type="match status" value="1"/>
</dbReference>
<dbReference type="Pfam" id="PF18339">
    <property type="entry name" value="Tudor_1_RapA"/>
    <property type="match status" value="1"/>
</dbReference>
<dbReference type="Pfam" id="PF18337">
    <property type="entry name" value="Tudor_RapA"/>
    <property type="match status" value="1"/>
</dbReference>
<dbReference type="SMART" id="SM00487">
    <property type="entry name" value="DEXDc"/>
    <property type="match status" value="1"/>
</dbReference>
<dbReference type="SMART" id="SM00490">
    <property type="entry name" value="HELICc"/>
    <property type="match status" value="1"/>
</dbReference>
<dbReference type="SUPFAM" id="SSF52540">
    <property type="entry name" value="P-loop containing nucleoside triphosphate hydrolases"/>
    <property type="match status" value="2"/>
</dbReference>
<dbReference type="PROSITE" id="PS51192">
    <property type="entry name" value="HELICASE_ATP_BIND_1"/>
    <property type="match status" value="1"/>
</dbReference>
<dbReference type="PROSITE" id="PS51194">
    <property type="entry name" value="HELICASE_CTER"/>
    <property type="match status" value="1"/>
</dbReference>
<protein>
    <recommendedName>
        <fullName evidence="1">RNA polymerase-associated protein RapA</fullName>
        <ecNumber evidence="1">3.6.4.-</ecNumber>
    </recommendedName>
    <alternativeName>
        <fullName evidence="1">ATP-dependent helicase HepA</fullName>
    </alternativeName>
</protein>
<reference key="1">
    <citation type="journal article" date="2008" name="Environ. Microbiol.">
        <title>The genome of Erwinia tasmaniensis strain Et1/99, a non-pathogenic bacterium in the genus Erwinia.</title>
        <authorList>
            <person name="Kube M."/>
            <person name="Migdoll A.M."/>
            <person name="Mueller I."/>
            <person name="Kuhl H."/>
            <person name="Beck A."/>
            <person name="Reinhardt R."/>
            <person name="Geider K."/>
        </authorList>
    </citation>
    <scope>NUCLEOTIDE SEQUENCE [LARGE SCALE GENOMIC DNA]</scope>
    <source>
        <strain>DSM 17950 / CFBP 7177 / CIP 109463 / NCPPB 4357 / Et1/99</strain>
    </source>
</reference>
<gene>
    <name evidence="1" type="primary">rapA</name>
    <name type="ordered locus">ETA_07300</name>
</gene>
<comment type="function">
    <text evidence="1">Transcription regulator that activates transcription by stimulating RNA polymerase (RNAP) recycling in case of stress conditions such as supercoiled DNA or high salt concentrations. Probably acts by releasing the RNAP, when it is trapped or immobilized on tightly supercoiled DNA. Does not activate transcription on linear DNA. Probably not involved in DNA repair.</text>
</comment>
<comment type="subunit">
    <text evidence="1">Interacts with the RNAP. Has a higher affinity for the core RNAP than for the holoenzyme. Its ATPase activity is stimulated by binding to RNAP.</text>
</comment>
<comment type="similarity">
    <text evidence="1">Belongs to the SNF2/RAD54 helicase family. RapA subfamily.</text>
</comment>
<proteinExistence type="inferred from homology"/>
<keyword id="KW-0010">Activator</keyword>
<keyword id="KW-0067">ATP-binding</keyword>
<keyword id="KW-0238">DNA-binding</keyword>
<keyword id="KW-0347">Helicase</keyword>
<keyword id="KW-0378">Hydrolase</keyword>
<keyword id="KW-0547">Nucleotide-binding</keyword>
<keyword id="KW-1185">Reference proteome</keyword>
<keyword id="KW-0804">Transcription</keyword>
<keyword id="KW-0805">Transcription regulation</keyword>
<evidence type="ECO:0000255" key="1">
    <source>
        <dbReference type="HAMAP-Rule" id="MF_01821"/>
    </source>
</evidence>